<evidence type="ECO:0000255" key="1">
    <source>
        <dbReference type="HAMAP-Rule" id="MF_00302"/>
    </source>
</evidence>
<gene>
    <name evidence="1" type="primary">clpS</name>
    <name type="ordered locus">Sputcn32_2228</name>
</gene>
<name>CLPS_SHEPC</name>
<dbReference type="EMBL" id="CP000681">
    <property type="protein sequence ID" value="ABP75949.1"/>
    <property type="molecule type" value="Genomic_DNA"/>
</dbReference>
<dbReference type="SMR" id="A4Y7L6"/>
<dbReference type="STRING" id="319224.Sputcn32_2228"/>
<dbReference type="KEGG" id="spc:Sputcn32_2228"/>
<dbReference type="eggNOG" id="COG2127">
    <property type="taxonomic scope" value="Bacteria"/>
</dbReference>
<dbReference type="HOGENOM" id="CLU_134358_2_1_6"/>
<dbReference type="GO" id="GO:0030163">
    <property type="term" value="P:protein catabolic process"/>
    <property type="evidence" value="ECO:0007669"/>
    <property type="project" value="InterPro"/>
</dbReference>
<dbReference type="GO" id="GO:0006508">
    <property type="term" value="P:proteolysis"/>
    <property type="evidence" value="ECO:0007669"/>
    <property type="project" value="UniProtKB-UniRule"/>
</dbReference>
<dbReference type="FunFam" id="3.30.1390.10:FF:000002">
    <property type="entry name" value="ATP-dependent Clp protease adapter protein ClpS"/>
    <property type="match status" value="1"/>
</dbReference>
<dbReference type="Gene3D" id="3.30.1390.10">
    <property type="match status" value="1"/>
</dbReference>
<dbReference type="HAMAP" id="MF_00302">
    <property type="entry name" value="ClpS"/>
    <property type="match status" value="1"/>
</dbReference>
<dbReference type="InterPro" id="IPR022935">
    <property type="entry name" value="ClpS"/>
</dbReference>
<dbReference type="InterPro" id="IPR003769">
    <property type="entry name" value="ClpS_core"/>
</dbReference>
<dbReference type="InterPro" id="IPR014719">
    <property type="entry name" value="Ribosomal_bL12_C/ClpS-like"/>
</dbReference>
<dbReference type="NCBIfam" id="NF000670">
    <property type="entry name" value="PRK00033.1-3"/>
    <property type="match status" value="1"/>
</dbReference>
<dbReference type="NCBIfam" id="NF000672">
    <property type="entry name" value="PRK00033.1-5"/>
    <property type="match status" value="1"/>
</dbReference>
<dbReference type="PANTHER" id="PTHR33473:SF19">
    <property type="entry name" value="ATP-DEPENDENT CLP PROTEASE ADAPTER PROTEIN CLPS"/>
    <property type="match status" value="1"/>
</dbReference>
<dbReference type="PANTHER" id="PTHR33473">
    <property type="entry name" value="ATP-DEPENDENT CLP PROTEASE ADAPTER PROTEIN CLPS1, CHLOROPLASTIC"/>
    <property type="match status" value="1"/>
</dbReference>
<dbReference type="Pfam" id="PF02617">
    <property type="entry name" value="ClpS"/>
    <property type="match status" value="1"/>
</dbReference>
<dbReference type="SUPFAM" id="SSF54736">
    <property type="entry name" value="ClpS-like"/>
    <property type="match status" value="1"/>
</dbReference>
<proteinExistence type="inferred from homology"/>
<organism>
    <name type="scientific">Shewanella putrefaciens (strain CN-32 / ATCC BAA-453)</name>
    <dbReference type="NCBI Taxonomy" id="319224"/>
    <lineage>
        <taxon>Bacteria</taxon>
        <taxon>Pseudomonadati</taxon>
        <taxon>Pseudomonadota</taxon>
        <taxon>Gammaproteobacteria</taxon>
        <taxon>Alteromonadales</taxon>
        <taxon>Shewanellaceae</taxon>
        <taxon>Shewanella</taxon>
    </lineage>
</organism>
<reference key="1">
    <citation type="submission" date="2007-04" db="EMBL/GenBank/DDBJ databases">
        <title>Complete sequence of Shewanella putrefaciens CN-32.</title>
        <authorList>
            <consortium name="US DOE Joint Genome Institute"/>
            <person name="Copeland A."/>
            <person name="Lucas S."/>
            <person name="Lapidus A."/>
            <person name="Barry K."/>
            <person name="Detter J.C."/>
            <person name="Glavina del Rio T."/>
            <person name="Hammon N."/>
            <person name="Israni S."/>
            <person name="Dalin E."/>
            <person name="Tice H."/>
            <person name="Pitluck S."/>
            <person name="Chain P."/>
            <person name="Malfatti S."/>
            <person name="Shin M."/>
            <person name="Vergez L."/>
            <person name="Schmutz J."/>
            <person name="Larimer F."/>
            <person name="Land M."/>
            <person name="Hauser L."/>
            <person name="Kyrpides N."/>
            <person name="Mikhailova N."/>
            <person name="Romine M.F."/>
            <person name="Fredrickson J."/>
            <person name="Tiedje J."/>
            <person name="Richardson P."/>
        </authorList>
    </citation>
    <scope>NUCLEOTIDE SEQUENCE [LARGE SCALE GENOMIC DNA]</scope>
    <source>
        <strain>CN-32 / ATCC BAA-453</strain>
    </source>
</reference>
<protein>
    <recommendedName>
        <fullName evidence="1">ATP-dependent Clp protease adapter protein ClpS</fullName>
    </recommendedName>
</protein>
<feature type="chain" id="PRO_1000022627" description="ATP-dependent Clp protease adapter protein ClpS">
    <location>
        <begin position="1"/>
        <end position="102"/>
    </location>
</feature>
<accession>A4Y7L6</accession>
<sequence length="102" mass="11691">MGKTGNIEHVEERVESELMPPSMYKVILNNDDYTPMDFVIEVLQVFFRKNEQEATDIMLTIHHQGKGICGIFPFGIAETKVIQVNQFARQNQHPLLCSLEKA</sequence>
<comment type="function">
    <text evidence="1">Involved in the modulation of the specificity of the ClpAP-mediated ATP-dependent protein degradation.</text>
</comment>
<comment type="subunit">
    <text evidence="1">Binds to the N-terminal domain of the chaperone ClpA.</text>
</comment>
<comment type="similarity">
    <text evidence="1">Belongs to the ClpS family.</text>
</comment>